<protein>
    <recommendedName>
        <fullName evidence="1">Glutamyl-tRNA reductase</fullName>
        <shortName evidence="1">GluTR</shortName>
        <ecNumber evidence="1">1.2.1.70</ecNumber>
    </recommendedName>
</protein>
<sequence length="418" mass="45752">MSLLAIGINHNTASVDLREKVAFGPDKLGPALEQLREHEAVNGSVIVSTCNRTELYCDVKQGARNKLIDWLAQFHQVSREDLMPSLYVHEEQAAIKHLMRVSCGLDSLVLGEPQILGQVKQAFSDSRDHQAVDSSIDKLFQKTFSVAKRVRTETDIGGNAVSVAYAACTLAKHIFESLSDSTVLLVGAGETIELVAKHLASNGCTKMIVANRTKERAQGLAEQFGAEVISLNEIPDYLARADIVISSTASPLPIIGKGMVETALKQRRHQPILLVDIAVPRDVEAQVGELNDAYLYSVDDLQSIIDSNIEQRKVEAIQAEAIVSEESASFMTWLRSLQAVDSIRDYRKSANEIREELLSKSLQSLAAGADPEKVLRELSNKLTNKLIHAPTRALQSAAEQGEPAKLTIIRQTLGLDDL</sequence>
<gene>
    <name evidence="1" type="primary">hemA</name>
    <name type="ordered locus">VP0742</name>
</gene>
<keyword id="KW-0521">NADP</keyword>
<keyword id="KW-0560">Oxidoreductase</keyword>
<keyword id="KW-0627">Porphyrin biosynthesis</keyword>
<feature type="chain" id="PRO_0000114084" description="Glutamyl-tRNA reductase">
    <location>
        <begin position="1"/>
        <end position="418"/>
    </location>
</feature>
<feature type="active site" description="Nucleophile" evidence="1">
    <location>
        <position position="50"/>
    </location>
</feature>
<feature type="binding site" evidence="1">
    <location>
        <begin position="49"/>
        <end position="52"/>
    </location>
    <ligand>
        <name>substrate</name>
    </ligand>
</feature>
<feature type="binding site" evidence="1">
    <location>
        <position position="107"/>
    </location>
    <ligand>
        <name>substrate</name>
    </ligand>
</feature>
<feature type="binding site" evidence="1">
    <location>
        <begin position="112"/>
        <end position="114"/>
    </location>
    <ligand>
        <name>substrate</name>
    </ligand>
</feature>
<feature type="binding site" evidence="1">
    <location>
        <position position="118"/>
    </location>
    <ligand>
        <name>substrate</name>
    </ligand>
</feature>
<feature type="binding site" evidence="1">
    <location>
        <begin position="187"/>
        <end position="192"/>
    </location>
    <ligand>
        <name>NADP(+)</name>
        <dbReference type="ChEBI" id="CHEBI:58349"/>
    </ligand>
</feature>
<feature type="site" description="Important for activity" evidence="1">
    <location>
        <position position="97"/>
    </location>
</feature>
<comment type="function">
    <text evidence="1">Catalyzes the NADPH-dependent reduction of glutamyl-tRNA(Glu) to glutamate 1-semialdehyde (GSA).</text>
</comment>
<comment type="catalytic activity">
    <reaction evidence="1">
        <text>(S)-4-amino-5-oxopentanoate + tRNA(Glu) + NADP(+) = L-glutamyl-tRNA(Glu) + NADPH + H(+)</text>
        <dbReference type="Rhea" id="RHEA:12344"/>
        <dbReference type="Rhea" id="RHEA-COMP:9663"/>
        <dbReference type="Rhea" id="RHEA-COMP:9680"/>
        <dbReference type="ChEBI" id="CHEBI:15378"/>
        <dbReference type="ChEBI" id="CHEBI:57501"/>
        <dbReference type="ChEBI" id="CHEBI:57783"/>
        <dbReference type="ChEBI" id="CHEBI:58349"/>
        <dbReference type="ChEBI" id="CHEBI:78442"/>
        <dbReference type="ChEBI" id="CHEBI:78520"/>
        <dbReference type="EC" id="1.2.1.70"/>
    </reaction>
</comment>
<comment type="pathway">
    <text evidence="1">Porphyrin-containing compound metabolism; protoporphyrin-IX biosynthesis; 5-aminolevulinate from L-glutamyl-tRNA(Glu): step 1/2.</text>
</comment>
<comment type="subunit">
    <text evidence="1">Homodimer.</text>
</comment>
<comment type="domain">
    <text evidence="1">Possesses an unusual extended V-shaped dimeric structure with each monomer consisting of three distinct domains arranged along a curved 'spinal' alpha-helix. The N-terminal catalytic domain specifically recognizes the glutamate moiety of the substrate. The second domain is the NADPH-binding domain, and the third C-terminal domain is responsible for dimerization.</text>
</comment>
<comment type="miscellaneous">
    <text evidence="1">During catalysis, the active site Cys acts as a nucleophile attacking the alpha-carbonyl group of tRNA-bound glutamate with the formation of a thioester intermediate between enzyme and glutamate, and the concomitant release of tRNA(Glu). The thioester intermediate is finally reduced by direct hydride transfer from NADPH, to form the product GSA.</text>
</comment>
<comment type="similarity">
    <text evidence="1">Belongs to the glutamyl-tRNA reductase family.</text>
</comment>
<accession>Q87RN5</accession>
<evidence type="ECO:0000255" key="1">
    <source>
        <dbReference type="HAMAP-Rule" id="MF_00087"/>
    </source>
</evidence>
<dbReference type="EC" id="1.2.1.70" evidence="1"/>
<dbReference type="EMBL" id="BA000031">
    <property type="protein sequence ID" value="BAC59005.1"/>
    <property type="molecule type" value="Genomic_DNA"/>
</dbReference>
<dbReference type="RefSeq" id="NP_797121.1">
    <property type="nucleotide sequence ID" value="NC_004603.1"/>
</dbReference>
<dbReference type="RefSeq" id="WP_005490531.1">
    <property type="nucleotide sequence ID" value="NC_004603.1"/>
</dbReference>
<dbReference type="SMR" id="Q87RN5"/>
<dbReference type="GeneID" id="1188237"/>
<dbReference type="KEGG" id="vpa:VP0742"/>
<dbReference type="PATRIC" id="fig|223926.6.peg.709"/>
<dbReference type="eggNOG" id="COG0373">
    <property type="taxonomic scope" value="Bacteria"/>
</dbReference>
<dbReference type="HOGENOM" id="CLU_035113_2_2_6"/>
<dbReference type="UniPathway" id="UPA00251">
    <property type="reaction ID" value="UER00316"/>
</dbReference>
<dbReference type="Proteomes" id="UP000002493">
    <property type="component" value="Chromosome 1"/>
</dbReference>
<dbReference type="GO" id="GO:0008883">
    <property type="term" value="F:glutamyl-tRNA reductase activity"/>
    <property type="evidence" value="ECO:0007669"/>
    <property type="project" value="UniProtKB-UniRule"/>
</dbReference>
<dbReference type="GO" id="GO:0050661">
    <property type="term" value="F:NADP binding"/>
    <property type="evidence" value="ECO:0007669"/>
    <property type="project" value="InterPro"/>
</dbReference>
<dbReference type="GO" id="GO:0019353">
    <property type="term" value="P:protoporphyrinogen IX biosynthetic process from glutamate"/>
    <property type="evidence" value="ECO:0007669"/>
    <property type="project" value="TreeGrafter"/>
</dbReference>
<dbReference type="CDD" id="cd05213">
    <property type="entry name" value="NAD_bind_Glutamyl_tRNA_reduct"/>
    <property type="match status" value="1"/>
</dbReference>
<dbReference type="FunFam" id="3.30.460.30:FF:000001">
    <property type="entry name" value="Glutamyl-tRNA reductase"/>
    <property type="match status" value="1"/>
</dbReference>
<dbReference type="FunFam" id="3.40.50.720:FF:000031">
    <property type="entry name" value="Glutamyl-tRNA reductase"/>
    <property type="match status" value="1"/>
</dbReference>
<dbReference type="Gene3D" id="3.30.460.30">
    <property type="entry name" value="Glutamyl-tRNA reductase, N-terminal domain"/>
    <property type="match status" value="1"/>
</dbReference>
<dbReference type="Gene3D" id="3.40.50.720">
    <property type="entry name" value="NAD(P)-binding Rossmann-like Domain"/>
    <property type="match status" value="1"/>
</dbReference>
<dbReference type="HAMAP" id="MF_00087">
    <property type="entry name" value="Glu_tRNA_reductase"/>
    <property type="match status" value="1"/>
</dbReference>
<dbReference type="InterPro" id="IPR000343">
    <property type="entry name" value="4pyrrol_synth_GluRdtase"/>
</dbReference>
<dbReference type="InterPro" id="IPR015896">
    <property type="entry name" value="4pyrrol_synth_GluRdtase_dimer"/>
</dbReference>
<dbReference type="InterPro" id="IPR015895">
    <property type="entry name" value="4pyrrol_synth_GluRdtase_N"/>
</dbReference>
<dbReference type="InterPro" id="IPR018214">
    <property type="entry name" value="GluRdtase_CS"/>
</dbReference>
<dbReference type="InterPro" id="IPR036453">
    <property type="entry name" value="GluRdtase_dimer_dom_sf"/>
</dbReference>
<dbReference type="InterPro" id="IPR036343">
    <property type="entry name" value="GluRdtase_N_sf"/>
</dbReference>
<dbReference type="InterPro" id="IPR036291">
    <property type="entry name" value="NAD(P)-bd_dom_sf"/>
</dbReference>
<dbReference type="InterPro" id="IPR006151">
    <property type="entry name" value="Shikm_DH/Glu-tRNA_Rdtase"/>
</dbReference>
<dbReference type="NCBIfam" id="TIGR01035">
    <property type="entry name" value="hemA"/>
    <property type="match status" value="1"/>
</dbReference>
<dbReference type="PANTHER" id="PTHR43013">
    <property type="entry name" value="GLUTAMYL-TRNA REDUCTASE"/>
    <property type="match status" value="1"/>
</dbReference>
<dbReference type="PANTHER" id="PTHR43013:SF1">
    <property type="entry name" value="GLUTAMYL-TRNA REDUCTASE"/>
    <property type="match status" value="1"/>
</dbReference>
<dbReference type="Pfam" id="PF00745">
    <property type="entry name" value="GlutR_dimer"/>
    <property type="match status" value="1"/>
</dbReference>
<dbReference type="Pfam" id="PF05201">
    <property type="entry name" value="GlutR_N"/>
    <property type="match status" value="1"/>
</dbReference>
<dbReference type="Pfam" id="PF01488">
    <property type="entry name" value="Shikimate_DH"/>
    <property type="match status" value="1"/>
</dbReference>
<dbReference type="PIRSF" id="PIRSF000445">
    <property type="entry name" value="4pyrrol_synth_GluRdtase"/>
    <property type="match status" value="1"/>
</dbReference>
<dbReference type="SUPFAM" id="SSF69742">
    <property type="entry name" value="Glutamyl tRNA-reductase catalytic, N-terminal domain"/>
    <property type="match status" value="1"/>
</dbReference>
<dbReference type="SUPFAM" id="SSF69075">
    <property type="entry name" value="Glutamyl tRNA-reductase dimerization domain"/>
    <property type="match status" value="1"/>
</dbReference>
<dbReference type="SUPFAM" id="SSF51735">
    <property type="entry name" value="NAD(P)-binding Rossmann-fold domains"/>
    <property type="match status" value="1"/>
</dbReference>
<dbReference type="PROSITE" id="PS00747">
    <property type="entry name" value="GLUTR"/>
    <property type="match status" value="1"/>
</dbReference>
<organism>
    <name type="scientific">Vibrio parahaemolyticus serotype O3:K6 (strain RIMD 2210633)</name>
    <dbReference type="NCBI Taxonomy" id="223926"/>
    <lineage>
        <taxon>Bacteria</taxon>
        <taxon>Pseudomonadati</taxon>
        <taxon>Pseudomonadota</taxon>
        <taxon>Gammaproteobacteria</taxon>
        <taxon>Vibrionales</taxon>
        <taxon>Vibrionaceae</taxon>
        <taxon>Vibrio</taxon>
    </lineage>
</organism>
<name>HEM1_VIBPA</name>
<proteinExistence type="inferred from homology"/>
<reference key="1">
    <citation type="journal article" date="2003" name="Lancet">
        <title>Genome sequence of Vibrio parahaemolyticus: a pathogenic mechanism distinct from that of V. cholerae.</title>
        <authorList>
            <person name="Makino K."/>
            <person name="Oshima K."/>
            <person name="Kurokawa K."/>
            <person name="Yokoyama K."/>
            <person name="Uda T."/>
            <person name="Tagomori K."/>
            <person name="Iijima Y."/>
            <person name="Najima M."/>
            <person name="Nakano M."/>
            <person name="Yamashita A."/>
            <person name="Kubota Y."/>
            <person name="Kimura S."/>
            <person name="Yasunaga T."/>
            <person name="Honda T."/>
            <person name="Shinagawa H."/>
            <person name="Hattori M."/>
            <person name="Iida T."/>
        </authorList>
    </citation>
    <scope>NUCLEOTIDE SEQUENCE [LARGE SCALE GENOMIC DNA]</scope>
    <source>
        <strain>RIMD 2210633</strain>
    </source>
</reference>